<gene>
    <name type="primary">GHR</name>
</gene>
<accession>Q9JI97</accession>
<accession>Q9JKG1</accession>
<accession>Q9JKT1</accession>
<feature type="signal peptide" evidence="4">
    <location>
        <begin position="1"/>
        <end position="18"/>
    </location>
</feature>
<feature type="chain" id="PRO_0000010955" description="Growth hormone receptor">
    <location>
        <begin position="19"/>
        <end position="628"/>
    </location>
</feature>
<feature type="chain" id="PRO_0000010956" description="Growth hormone-binding protein" evidence="3">
    <location>
        <begin position="19"/>
        <end position="256"/>
    </location>
</feature>
<feature type="topological domain" description="Extracellular" evidence="4">
    <location>
        <begin position="19"/>
        <end position="266"/>
    </location>
</feature>
<feature type="transmembrane region" description="Helical" evidence="4">
    <location>
        <begin position="267"/>
        <end position="287"/>
    </location>
</feature>
<feature type="topological domain" description="Cytoplasmic" evidence="4">
    <location>
        <begin position="288"/>
        <end position="628"/>
    </location>
</feature>
<feature type="domain" description="Fibronectin type-III" evidence="5">
    <location>
        <begin position="151"/>
        <end position="254"/>
    </location>
</feature>
<feature type="region of interest" description="Required for JAK2 binding" evidence="2">
    <location>
        <begin position="294"/>
        <end position="379"/>
    </location>
</feature>
<feature type="short sequence motif" description="WSXWS motif" evidence="1">
    <location>
        <begin position="240"/>
        <end position="244"/>
    </location>
</feature>
<feature type="short sequence motif" description="Box 1 motif" evidence="2">
    <location>
        <begin position="297"/>
        <end position="305"/>
    </location>
</feature>
<feature type="short sequence motif" description="UbE motif" evidence="3">
    <location>
        <begin position="340"/>
        <end position="349"/>
    </location>
</feature>
<feature type="modified residue" description="Phosphoserine" evidence="1">
    <location>
        <position position="341"/>
    </location>
</feature>
<feature type="modified residue" description="Phosphotyrosine" evidence="1">
    <location>
        <position position="483"/>
    </location>
</feature>
<feature type="modified residue" description="Phosphotyrosine" evidence="1">
    <location>
        <position position="585"/>
    </location>
</feature>
<feature type="glycosylation site" description="N-linked (GlcNAc...) asparagine" evidence="4">
    <location>
        <position position="33"/>
    </location>
</feature>
<feature type="glycosylation site" description="N-linked (GlcNAc...) asparagine" evidence="4">
    <location>
        <position position="40"/>
    </location>
</feature>
<feature type="glycosylation site" description="N-linked (GlcNAc...) asparagine" evidence="4">
    <location>
        <position position="46"/>
    </location>
</feature>
<feature type="glycosylation site" description="N-linked (GlcNAc...) asparagine" evidence="4">
    <location>
        <position position="115"/>
    </location>
</feature>
<feature type="glycosylation site" description="N-linked (GlcNAc...) asparagine" evidence="4">
    <location>
        <position position="156"/>
    </location>
</feature>
<feature type="glycosylation site" description="N-linked (GlcNAc...) asparagine" evidence="4">
    <location>
        <position position="161"/>
    </location>
</feature>
<feature type="glycosylation site" description="N-linked (GlcNAc...) asparagine" evidence="4">
    <location>
        <position position="200"/>
    </location>
</feature>
<feature type="disulfide bond" evidence="1">
    <location>
        <begin position="56"/>
        <end position="66"/>
    </location>
</feature>
<feature type="disulfide bond" evidence="1">
    <location>
        <begin position="101"/>
        <end position="112"/>
    </location>
</feature>
<feature type="disulfide bond" evidence="1">
    <location>
        <begin position="126"/>
        <end position="140"/>
    </location>
</feature>
<feature type="sequence conflict" description="In Ref. 3; AAF35249." evidence="8" ref="3">
    <original>H</original>
    <variation>P</variation>
    <location>
        <position position="73"/>
    </location>
</feature>
<feature type="sequence conflict" description="In Ref. 2; AAF67171." evidence="8" ref="2">
    <original>Q</original>
    <variation>K</variation>
    <location>
        <position position="148"/>
    </location>
</feature>
<feature type="sequence conflict" description="In Ref. 3; AAF35249." evidence="8" ref="3">
    <original>TA</original>
    <variation>NS</variation>
    <location>
        <begin position="165"/>
        <end position="166"/>
    </location>
</feature>
<feature type="sequence conflict" description="In Ref. 2; AAF67171." evidence="8" ref="2">
    <original>I</original>
    <variation>T</variation>
    <location>
        <position position="167"/>
    </location>
</feature>
<feature type="sequence conflict" description="In Ref. 2; AAF67171." evidence="8" ref="2">
    <original>V</original>
    <variation>I</variation>
    <location>
        <position position="309"/>
    </location>
</feature>
<feature type="sequence conflict" description="In Ref. 2; AAF67171." evidence="8" ref="2">
    <original>D</original>
    <variation>N</variation>
    <location>
        <position position="354"/>
    </location>
</feature>
<feature type="sequence conflict" description="In Ref. 2; AAF67171." evidence="8" ref="2">
    <original>L</original>
    <variation>Q</variation>
    <location>
        <position position="628"/>
    </location>
</feature>
<dbReference type="EMBL" id="AF247665">
    <property type="protein sequence ID" value="AAF74191.1"/>
    <property type="molecule type" value="mRNA"/>
</dbReference>
<dbReference type="EMBL" id="AF238492">
    <property type="protein sequence ID" value="AAF67171.1"/>
    <property type="molecule type" value="mRNA"/>
</dbReference>
<dbReference type="EMBL" id="AF227186">
    <property type="protein sequence ID" value="AAF35249.1"/>
    <property type="molecule type" value="mRNA"/>
</dbReference>
<dbReference type="RefSeq" id="NP_001166177.1">
    <property type="nucleotide sequence ID" value="NM_001172706.1"/>
</dbReference>
<dbReference type="SMR" id="Q9JI97"/>
<dbReference type="FunCoup" id="Q9JI97">
    <property type="interactions" value="1099"/>
</dbReference>
<dbReference type="STRING" id="10141.ENSCPOP00000026579"/>
<dbReference type="GlyCosmos" id="Q9JI97">
    <property type="glycosylation" value="7 sites, No reported glycans"/>
</dbReference>
<dbReference type="GeneID" id="100135527"/>
<dbReference type="KEGG" id="cpoc:100135527"/>
<dbReference type="CTD" id="2690"/>
<dbReference type="eggNOG" id="KOG3555">
    <property type="taxonomic scope" value="Eukaryota"/>
</dbReference>
<dbReference type="InParanoid" id="Q9JI97"/>
<dbReference type="OrthoDB" id="9890215at2759"/>
<dbReference type="Proteomes" id="UP000005447">
    <property type="component" value="Unassembled WGS sequence"/>
</dbReference>
<dbReference type="GO" id="GO:0009897">
    <property type="term" value="C:external side of plasma membrane"/>
    <property type="evidence" value="ECO:0007669"/>
    <property type="project" value="TreeGrafter"/>
</dbReference>
<dbReference type="GO" id="GO:0005576">
    <property type="term" value="C:extracellular region"/>
    <property type="evidence" value="ECO:0007669"/>
    <property type="project" value="UniProtKB-SubCell"/>
</dbReference>
<dbReference type="GO" id="GO:0004896">
    <property type="term" value="F:cytokine receptor activity"/>
    <property type="evidence" value="ECO:0007669"/>
    <property type="project" value="InterPro"/>
</dbReference>
<dbReference type="GO" id="GO:0006897">
    <property type="term" value="P:endocytosis"/>
    <property type="evidence" value="ECO:0007669"/>
    <property type="project" value="UniProtKB-KW"/>
</dbReference>
<dbReference type="CDD" id="cd00063">
    <property type="entry name" value="FN3"/>
    <property type="match status" value="1"/>
</dbReference>
<dbReference type="FunFam" id="2.60.40.10:FF:000269">
    <property type="entry name" value="Growth hormone receptor"/>
    <property type="match status" value="1"/>
</dbReference>
<dbReference type="FunFam" id="2.60.40.10:FF:000318">
    <property type="entry name" value="Growth hormone receptor"/>
    <property type="match status" value="1"/>
</dbReference>
<dbReference type="Gene3D" id="2.60.40.10">
    <property type="entry name" value="Immunoglobulins"/>
    <property type="match status" value="2"/>
</dbReference>
<dbReference type="InterPro" id="IPR003961">
    <property type="entry name" value="FN3_dom"/>
</dbReference>
<dbReference type="InterPro" id="IPR036116">
    <property type="entry name" value="FN3_sf"/>
</dbReference>
<dbReference type="InterPro" id="IPR025871">
    <property type="entry name" value="GHBP"/>
</dbReference>
<dbReference type="InterPro" id="IPR015152">
    <property type="entry name" value="Growth/epo_recpt_lig-bind"/>
</dbReference>
<dbReference type="InterPro" id="IPR013783">
    <property type="entry name" value="Ig-like_fold"/>
</dbReference>
<dbReference type="InterPro" id="IPR003528">
    <property type="entry name" value="Long_hematopoietin_rcpt_CS"/>
</dbReference>
<dbReference type="PANTHER" id="PTHR23037">
    <property type="entry name" value="CYTOKINE RECEPTOR"/>
    <property type="match status" value="1"/>
</dbReference>
<dbReference type="PANTHER" id="PTHR23037:SF46">
    <property type="entry name" value="INTERLEUKIN 5 RECEPTOR SUBUNIT ALPHA"/>
    <property type="match status" value="1"/>
</dbReference>
<dbReference type="Pfam" id="PF09067">
    <property type="entry name" value="EpoR_lig-bind"/>
    <property type="match status" value="1"/>
</dbReference>
<dbReference type="Pfam" id="PF12772">
    <property type="entry name" value="GHBP"/>
    <property type="match status" value="1"/>
</dbReference>
<dbReference type="SUPFAM" id="SSF49265">
    <property type="entry name" value="Fibronectin type III"/>
    <property type="match status" value="2"/>
</dbReference>
<dbReference type="PROSITE" id="PS50853">
    <property type="entry name" value="FN3"/>
    <property type="match status" value="1"/>
</dbReference>
<dbReference type="PROSITE" id="PS01352">
    <property type="entry name" value="HEMATOPO_REC_L_F1"/>
    <property type="match status" value="1"/>
</dbReference>
<comment type="function">
    <text evidence="1">Receptor for pituitary gland growth hormone (GH1) involved in regulating postnatal body growth. On ligand binding, couples to the JAK2/STAT5 pathway.</text>
</comment>
<comment type="function">
    <molecule>Growth hormone-binding protein</molecule>
    <text evidence="1">The soluble form (GHBP) acts as a reservoir of growth hormone in plasma and may be a modulator/inhibitor of GH signaling.</text>
</comment>
<comment type="subunit">
    <text evidence="1">On growth hormone (GH) binding, forms homodimers and binds JAK2 via a box 1-containing domain.</text>
</comment>
<comment type="subcellular location">
    <subcellularLocation>
        <location evidence="1">Cell membrane</location>
        <topology evidence="4">Single-pass type I membrane protein</topology>
    </subcellularLocation>
    <text evidence="3">On growth hormone binding, GHR is ubiquitinated, internalized, down-regulated and transported into a degradative or non-degradative pathway.</text>
</comment>
<comment type="subcellular location">
    <molecule>Growth hormone-binding protein</molecule>
    <subcellularLocation>
        <location evidence="1">Secreted</location>
    </subcellularLocation>
    <text evidence="1">Complexed to a substantial fraction of circulating GH.</text>
</comment>
<comment type="domain">
    <text evidence="1">The WSXWS motif appears to be necessary for proper protein folding and thereby efficient intracellular transport and cell-surface receptor binding.</text>
</comment>
<comment type="domain">
    <text evidence="2">The box 1 motif is required for JAK interaction and/or activation.</text>
</comment>
<comment type="domain">
    <text evidence="1">The extracellular domain is the ligand-binding domain representing the growth hormone-binding protein (GHBP).</text>
</comment>
<comment type="domain">
    <text evidence="3">The ubiquitination-dependent endocytosis motif (UbE) is required for recruitment of the ubiquitin conjugation system on to the receptor and for its internalization.</text>
</comment>
<comment type="PTM">
    <text evidence="1 3">The soluble form (GHBP) is produced by phorbol ester-promoted proteolytic cleavage at the cell surface (shedding) by ADAM17/TACE (By similarity). Shedding is inhibited by growth hormone (GH) binding to the receptor probably due to a conformational change in GHR rendering the receptor inaccessible to ADAM17 (By similarity).</text>
</comment>
<comment type="PTM">
    <text evidence="1">On GH binding, phosphorylated on tyrosine residues in the cytoplasmic domain by JAK2.</text>
</comment>
<comment type="PTM">
    <text evidence="1 3">Ubiquitinated by the ECS(SOCS2) complex following ligand-binding and phosphorylation by JAK2, leading to its degradation by the proteasome. Regulation by the ECS(SOCS2) complex acts as a negative feedback loop of growth hormone receptor signaling (By similarity). Ubiquitination is not sufficient for GHR internalization (By similarity).</text>
</comment>
<comment type="miscellaneous">
    <text evidence="6">Guinea-pig is completely unresponsive to endogenous or exogenous growth hormone. It is not clear whether the aberrant behavior of its GH-GHR system can be attributed to a defect in post-receptor signaling.</text>
</comment>
<comment type="similarity">
    <text evidence="8">Belongs to the type I cytokine receptor family. Type 1 subfamily.</text>
</comment>
<organism>
    <name type="scientific">Cavia porcellus</name>
    <name type="common">Guinea pig</name>
    <dbReference type="NCBI Taxonomy" id="10141"/>
    <lineage>
        <taxon>Eukaryota</taxon>
        <taxon>Metazoa</taxon>
        <taxon>Chordata</taxon>
        <taxon>Craniata</taxon>
        <taxon>Vertebrata</taxon>
        <taxon>Euteleostomi</taxon>
        <taxon>Mammalia</taxon>
        <taxon>Eutheria</taxon>
        <taxon>Euarchontoglires</taxon>
        <taxon>Glires</taxon>
        <taxon>Rodentia</taxon>
        <taxon>Hystricomorpha</taxon>
        <taxon>Caviidae</taxon>
        <taxon>Cavia</taxon>
    </lineage>
</organism>
<protein>
    <recommendedName>
        <fullName evidence="7">Growth hormone receptor</fullName>
        <shortName>GH receptor</shortName>
    </recommendedName>
    <alternativeName>
        <fullName>Somatotropin receptor</fullName>
    </alternativeName>
    <component>
        <recommendedName>
            <fullName>Growth hormone-binding protein</fullName>
            <shortName>GH-binding protein</shortName>
            <shortName>GHBP</shortName>
        </recommendedName>
        <alternativeName>
            <fullName>Serum-binding protein</fullName>
        </alternativeName>
    </component>
</protein>
<proteinExistence type="evidence at transcript level"/>
<evidence type="ECO:0000250" key="1">
    <source>
        <dbReference type="UniProtKB" id="P10912"/>
    </source>
</evidence>
<evidence type="ECO:0000250" key="2">
    <source>
        <dbReference type="UniProtKB" id="P16310"/>
    </source>
</evidence>
<evidence type="ECO:0000250" key="3">
    <source>
        <dbReference type="UniProtKB" id="P19941"/>
    </source>
</evidence>
<evidence type="ECO:0000255" key="4"/>
<evidence type="ECO:0000255" key="5">
    <source>
        <dbReference type="PROSITE-ProRule" id="PRU00316"/>
    </source>
</evidence>
<evidence type="ECO:0000269" key="6">
    <source>
    </source>
</evidence>
<evidence type="ECO:0000303" key="7">
    <source>
    </source>
</evidence>
<evidence type="ECO:0000305" key="8"/>
<sequence length="628" mass="70355">MDLWQLLLTLAVVGSSNAFVGREAVTVTLNRANLSLQRVNASLETNSSGNPKFTKCRSPELETFSCHWTDEGHHGLKSTGFIQMFYTKRNSQEQNQEWKECPDYVSAGENSCYFNSSYTSIWKPYCVKLTSNGGKVDEKCFYVEEIVQPDPPTGLNWTLMNTSATAIYGDIQVRWKPPRSADVKKGWIMLDYELQIKQTNETQWKMMDPVTSTSVPLYSLRLDKEYEVRIRSRLQNSDKYGEFSEILYITLPQSSPFTCEEEFQFPWFLIMIFGIFGLTVMLLVVMFSKQQRIKMLILPPVPVPKIKGVDPDLLKEGKLEEVNTILAIHDNSKPQFYNDDSWVEFIELDIDDSDEKIEGSDTDRLLSSDHQKSLNILGAKDGDSGRTSCYEPDILEADFNANDGTSEDVQPDKLKEEADLLCLDEKNQNNSPCDAPPDPQQALVIPPEEEKPQPLLIGKTESTNQDAPNQISNPISLANMDFYAQVSDITPAGSVVLSPGQKNKAGLSQCEAHPEANFVKDNACFFKGDAKNPDVMTPHIEVKSHEEPSFKQEDPYITTESLTTAAEKSGPPEQSPSSEMALPDYTSIHIVQSPQGLILNAAALPLPDKEFLSSCGYVSTDQLNKIML</sequence>
<keyword id="KW-1003">Cell membrane</keyword>
<keyword id="KW-1015">Disulfide bond</keyword>
<keyword id="KW-0254">Endocytosis</keyword>
<keyword id="KW-0325">Glycoprotein</keyword>
<keyword id="KW-0472">Membrane</keyword>
<keyword id="KW-0597">Phosphoprotein</keyword>
<keyword id="KW-0675">Receptor</keyword>
<keyword id="KW-1185">Reference proteome</keyword>
<keyword id="KW-0964">Secreted</keyword>
<keyword id="KW-0732">Signal</keyword>
<keyword id="KW-0812">Transmembrane</keyword>
<keyword id="KW-1133">Transmembrane helix</keyword>
<keyword id="KW-0832">Ubl conjugation</keyword>
<name>GHR_CAVPO</name>
<reference key="1">
    <citation type="journal article" date="2000" name="Sheng Wu Hua Xue Yu Sheng Wu Wu Li Xue Bao">
        <title>cDNA cloning of the guinea pig growth hormone receptor.</title>
        <authorList>
            <person name="Zhang X.N."/>
            <person name="Lu X.B."/>
            <person name="Zhu S.Q."/>
        </authorList>
    </citation>
    <scope>NUCLEOTIDE SEQUENCE [MRNA]</scope>
</reference>
<reference key="2">
    <citation type="journal article" date="2000" name="Gene">
        <title>Molecular evolution of growth hormone and receptor in the guinea-pig, a mammal unresponsive to growth hormone.</title>
        <authorList>
            <person name="Adkins R.M."/>
            <person name="Vandeberg J."/>
            <person name="Li W.-H."/>
        </authorList>
    </citation>
    <scope>NUCLEOTIDE SEQUENCE [MRNA]</scope>
</reference>
<reference key="3">
    <citation type="submission" date="2000-01" db="EMBL/GenBank/DDBJ databases">
        <title>Sequence of the guinea pig growth hormone (GH) receptor: a possible explanation for the GH insensitivity of the guinea pig.</title>
        <authorList>
            <person name="Jullie H.A."/>
            <person name="Ymer S.I."/>
            <person name="Harrop S.A."/>
            <person name="Odorico D.M."/>
            <person name="Herington A.C."/>
        </authorList>
    </citation>
    <scope>NUCLEOTIDE SEQUENCE [MRNA]</scope>
</reference>